<accession>P76186</accession>
<accession>P76894</accession>
<reference key="1">
    <citation type="journal article" date="1997" name="Science">
        <title>The complete genome sequence of Escherichia coli K-12.</title>
        <authorList>
            <person name="Blattner F.R."/>
            <person name="Plunkett G. III"/>
            <person name="Bloch C.A."/>
            <person name="Perna N.T."/>
            <person name="Burland V."/>
            <person name="Riley M."/>
            <person name="Collado-Vides J."/>
            <person name="Glasner J.D."/>
            <person name="Rode C.K."/>
            <person name="Mayhew G.F."/>
            <person name="Gregor J."/>
            <person name="Davis N.W."/>
            <person name="Kirkpatrick H.A."/>
            <person name="Goeden M.A."/>
            <person name="Rose D.J."/>
            <person name="Mau B."/>
            <person name="Shao Y."/>
        </authorList>
    </citation>
    <scope>NUCLEOTIDE SEQUENCE [LARGE SCALE GENOMIC DNA]</scope>
    <source>
        <strain>K12 / MG1655 / ATCC 47076</strain>
    </source>
</reference>
<reference key="2">
    <citation type="journal article" date="2006" name="Mol. Syst. Biol.">
        <title>Highly accurate genome sequences of Escherichia coli K-12 strains MG1655 and W3110.</title>
        <authorList>
            <person name="Hayashi K."/>
            <person name="Morooka N."/>
            <person name="Yamamoto Y."/>
            <person name="Fujita K."/>
            <person name="Isono K."/>
            <person name="Choi S."/>
            <person name="Ohtsubo E."/>
            <person name="Baba T."/>
            <person name="Wanner B.L."/>
            <person name="Mori H."/>
            <person name="Horiuchi T."/>
        </authorList>
    </citation>
    <scope>NUCLEOTIDE SEQUENCE [LARGE SCALE GENOMIC DNA]</scope>
    <source>
        <strain>K12 / W3110 / ATCC 27325 / DSM 5911</strain>
    </source>
</reference>
<reference key="3">
    <citation type="journal article" date="1996" name="DNA Res.">
        <title>A 570-kb DNA sequence of the Escherichia coli K-12 genome corresponding to the 28.0-40.1 min region on the linkage map.</title>
        <authorList>
            <person name="Aiba H."/>
            <person name="Baba T."/>
            <person name="Fujita K."/>
            <person name="Hayashi K."/>
            <person name="Inada T."/>
            <person name="Isono K."/>
            <person name="Itoh T."/>
            <person name="Kasai H."/>
            <person name="Kashimoto K."/>
            <person name="Kimura S."/>
            <person name="Kitakawa M."/>
            <person name="Kitagawa M."/>
            <person name="Makino K."/>
            <person name="Miki T."/>
            <person name="Mizobuchi K."/>
            <person name="Mori H."/>
            <person name="Mori T."/>
            <person name="Motomura K."/>
            <person name="Nakade S."/>
            <person name="Nakamura Y."/>
            <person name="Nashimoto H."/>
            <person name="Nishio Y."/>
            <person name="Oshima T."/>
            <person name="Saito N."/>
            <person name="Sampei G."/>
            <person name="Seki Y."/>
            <person name="Sivasundaram S."/>
            <person name="Tagami H."/>
            <person name="Takeda J."/>
            <person name="Takemoto K."/>
            <person name="Takeuchi Y."/>
            <person name="Wada C."/>
            <person name="Yamamoto Y."/>
            <person name="Horiuchi T."/>
        </authorList>
    </citation>
    <scope>NUCLEOTIDE SEQUENCE [LARGE SCALE GENOMIC DNA] OF 1-169</scope>
    <source>
        <strain>K12 / W3110 / ATCC 27325 / DSM 5911</strain>
    </source>
</reference>
<sequence>MNASSWSLRNLPWFRATLAQWRYALRNTIAMCLALTVAYYLNLDEPYWAMTSAAVVSFPTVGGVISKSLGRIAGSLLGAIAALLLAGHTLNEPWFFLLSMSAWLGFCTWACAHFTNNVAYAFQLAGYTAAIIAFPMVNITEASQLWDIAQARVCEVIVGILCGGMMMMILPSSSDATALLTALKNMHARLLEHASLLWQPETTDAIRAAHEGVIGQILTMNLLRIQAFWSHYRFRQQNARLNALLHQQLRMTSVISSLRRMLLNWPSPPGATREILEQLLTALASSQTDVYTVARIIAPLRPTNVADYRHVAFWQRLRYFCRLYLQSSQELHRLQSGVDDHTRLPRTSGLARHTDNAEAMWSGLRTFCTLMMIGAWSIASQWDAGANALTLAAISCVLYSAVAAPFKSLSLLMRTLVLLSLFSFVVKFGLMVQISDLWQFLLFLFPLLATMQLLKLQMPKFAALWGQLIVFMGSFIAVTNPPVYDFADFLNDNLAKIVGVALAWLAFAILRPGSDARKSRRHIRALRRDFVDQLSRHPTLSESEFESLTYHHVSQLSNSQDALARRWLLRWGVVLLNCSHVVWQLRDWESRSDPLSRVRDNCISLLRGVMSERGVQQKSLAATLEELQRICDSLARHHQPAARELAAIVWRLYCSLSQLEQAPPQGTLAS</sequence>
<feature type="chain" id="PRO_0000210093" description="Uncharacterized transporter YdhK">
    <location>
        <begin position="1"/>
        <end position="670"/>
    </location>
</feature>
<feature type="transmembrane region" description="Helical" evidence="1">
    <location>
        <begin position="23"/>
        <end position="42"/>
    </location>
</feature>
<feature type="transmembrane region" description="Helical" evidence="1">
    <location>
        <begin position="47"/>
        <end position="69"/>
    </location>
</feature>
<feature type="transmembrane region" description="Helical" evidence="1">
    <location>
        <begin position="76"/>
        <end position="98"/>
    </location>
</feature>
<feature type="transmembrane region" description="Helical" evidence="1">
    <location>
        <begin position="118"/>
        <end position="140"/>
    </location>
</feature>
<feature type="transmembrane region" description="Helical" evidence="1">
    <location>
        <begin position="153"/>
        <end position="170"/>
    </location>
</feature>
<feature type="transmembrane region" description="Helical" evidence="1">
    <location>
        <begin position="381"/>
        <end position="403"/>
    </location>
</feature>
<feature type="transmembrane region" description="Helical" evidence="1">
    <location>
        <begin position="410"/>
        <end position="432"/>
    </location>
</feature>
<feature type="transmembrane region" description="Helical" evidence="1">
    <location>
        <begin position="437"/>
        <end position="454"/>
    </location>
</feature>
<feature type="transmembrane region" description="Helical" evidence="1">
    <location>
        <begin position="461"/>
        <end position="483"/>
    </location>
</feature>
<feature type="transmembrane region" description="Helical" evidence="1">
    <location>
        <begin position="493"/>
        <end position="510"/>
    </location>
</feature>
<gene>
    <name type="primary">ydhK</name>
    <name type="ordered locus">b1645</name>
    <name type="ordered locus">JW1637</name>
</gene>
<name>YDHK_ECOLI</name>
<organism>
    <name type="scientific">Escherichia coli (strain K12)</name>
    <dbReference type="NCBI Taxonomy" id="83333"/>
    <lineage>
        <taxon>Bacteria</taxon>
        <taxon>Pseudomonadati</taxon>
        <taxon>Pseudomonadota</taxon>
        <taxon>Gammaproteobacteria</taxon>
        <taxon>Enterobacterales</taxon>
        <taxon>Enterobacteriaceae</taxon>
        <taxon>Escherichia</taxon>
    </lineage>
</organism>
<evidence type="ECO:0000255" key="1"/>
<evidence type="ECO:0000305" key="2"/>
<comment type="subcellular location">
    <subcellularLocation>
        <location evidence="2">Cell membrane</location>
        <topology evidence="2">Multi-pass membrane protein</topology>
    </subcellularLocation>
</comment>
<comment type="similarity">
    <text evidence="2">Belongs to the aromatic acid exporter ArAE (TC 2.A.85) family.</text>
</comment>
<keyword id="KW-1003">Cell membrane</keyword>
<keyword id="KW-0472">Membrane</keyword>
<keyword id="KW-1185">Reference proteome</keyword>
<keyword id="KW-0812">Transmembrane</keyword>
<keyword id="KW-1133">Transmembrane helix</keyword>
<keyword id="KW-0813">Transport</keyword>
<protein>
    <recommendedName>
        <fullName>Uncharacterized transporter YdhK</fullName>
    </recommendedName>
</protein>
<dbReference type="EMBL" id="U00096">
    <property type="protein sequence ID" value="AAC74717.1"/>
    <property type="molecule type" value="Genomic_DNA"/>
</dbReference>
<dbReference type="EMBL" id="AP009048">
    <property type="protein sequence ID" value="BAA15405.2"/>
    <property type="molecule type" value="Genomic_DNA"/>
</dbReference>
<dbReference type="PIR" id="G64921">
    <property type="entry name" value="G64921"/>
</dbReference>
<dbReference type="RefSeq" id="NP_416162.1">
    <property type="nucleotide sequence ID" value="NC_000913.3"/>
</dbReference>
<dbReference type="RefSeq" id="WP_000994333.1">
    <property type="nucleotide sequence ID" value="NZ_STEB01000003.1"/>
</dbReference>
<dbReference type="BioGRID" id="4263048">
    <property type="interactions" value="187"/>
</dbReference>
<dbReference type="FunCoup" id="P76186">
    <property type="interactions" value="113"/>
</dbReference>
<dbReference type="IntAct" id="P76186">
    <property type="interactions" value="5"/>
</dbReference>
<dbReference type="STRING" id="511145.b1645"/>
<dbReference type="PaxDb" id="511145-b1645"/>
<dbReference type="EnsemblBacteria" id="AAC74717">
    <property type="protein sequence ID" value="AAC74717"/>
    <property type="gene ID" value="b1645"/>
</dbReference>
<dbReference type="GeneID" id="946528"/>
<dbReference type="KEGG" id="ecj:JW1637"/>
<dbReference type="KEGG" id="eco:b1645"/>
<dbReference type="KEGG" id="ecoc:C3026_09445"/>
<dbReference type="PATRIC" id="fig|1411691.4.peg.614"/>
<dbReference type="EchoBASE" id="EB3703"/>
<dbReference type="eggNOG" id="COG1289">
    <property type="taxonomic scope" value="Bacteria"/>
</dbReference>
<dbReference type="InParanoid" id="P76186"/>
<dbReference type="OMA" id="LNDPWLF"/>
<dbReference type="OrthoDB" id="9807111at2"/>
<dbReference type="PhylomeDB" id="P76186"/>
<dbReference type="BioCyc" id="EcoCyc:G6885-MONOMER"/>
<dbReference type="PRO" id="PR:P76186"/>
<dbReference type="Proteomes" id="UP000000625">
    <property type="component" value="Chromosome"/>
</dbReference>
<dbReference type="GO" id="GO:0005886">
    <property type="term" value="C:plasma membrane"/>
    <property type="evidence" value="ECO:0000314"/>
    <property type="project" value="EcoCyc"/>
</dbReference>
<dbReference type="GO" id="GO:0022857">
    <property type="term" value="F:transmembrane transporter activity"/>
    <property type="evidence" value="ECO:0007669"/>
    <property type="project" value="InterPro"/>
</dbReference>
<dbReference type="InterPro" id="IPR006726">
    <property type="entry name" value="PHBA_efflux_AaeB/fusaric-R"/>
</dbReference>
<dbReference type="PANTHER" id="PTHR30509:SF9">
    <property type="entry name" value="MULTIDRUG RESISTANCE PROTEIN MDTO"/>
    <property type="match status" value="1"/>
</dbReference>
<dbReference type="PANTHER" id="PTHR30509">
    <property type="entry name" value="P-HYDROXYBENZOIC ACID EFFLUX PUMP SUBUNIT-RELATED"/>
    <property type="match status" value="1"/>
</dbReference>
<dbReference type="Pfam" id="PF04632">
    <property type="entry name" value="FUSC"/>
    <property type="match status" value="1"/>
</dbReference>
<proteinExistence type="inferred from homology"/>